<sequence length="88" mass="9658">MANNPSQLLPSELIDRCIGSKIWVIMKGDKELVGILKGFDVYVNMVLEDVTEYEITAEGRRVTKLDQILLNGNNIAILVPGGSPEDGE</sequence>
<proteinExistence type="evidence at protein level"/>
<protein>
    <recommendedName>
        <fullName evidence="10">Sm-like protein LSM5</fullName>
        <shortName evidence="9">AtLSM5</shortName>
    </recommendedName>
    <alternativeName>
        <fullName evidence="7">Protein SUPERSENSITIVE TO ABA AND DROUGHT 1</fullName>
        <shortName evidence="7">AtSAD1</shortName>
    </alternativeName>
    <alternativeName>
        <fullName evidence="10">U6 snRNA-associated Sm-like protein LSM5</fullName>
    </alternativeName>
</protein>
<gene>
    <name evidence="8" type="primary">LSM5</name>
    <name evidence="7" type="synonym">SAD1</name>
    <name evidence="12" type="ordered locus">At5g48870</name>
    <name evidence="13" type="ORF">K24G6.21</name>
</gene>
<organism>
    <name type="scientific">Arabidopsis thaliana</name>
    <name type="common">Mouse-ear cress</name>
    <dbReference type="NCBI Taxonomy" id="3702"/>
    <lineage>
        <taxon>Eukaryota</taxon>
        <taxon>Viridiplantae</taxon>
        <taxon>Streptophyta</taxon>
        <taxon>Embryophyta</taxon>
        <taxon>Tracheophyta</taxon>
        <taxon>Spermatophyta</taxon>
        <taxon>Magnoliopsida</taxon>
        <taxon>eudicotyledons</taxon>
        <taxon>Gunneridae</taxon>
        <taxon>Pentapetalae</taxon>
        <taxon>rosids</taxon>
        <taxon>malvids</taxon>
        <taxon>Brassicales</taxon>
        <taxon>Brassicaceae</taxon>
        <taxon>Camelineae</taxon>
        <taxon>Arabidopsis</taxon>
    </lineage>
</organism>
<feature type="initiator methionine" description="Removed" evidence="14">
    <location>
        <position position="1"/>
    </location>
</feature>
<feature type="chain" id="PRO_0000431647" description="Sm-like protein LSM5">
    <location>
        <begin position="2"/>
        <end position="88"/>
    </location>
</feature>
<feature type="domain" description="Sm" evidence="1">
    <location>
        <begin position="9"/>
        <end position="84"/>
    </location>
</feature>
<feature type="modified residue" description="N-acetylalanine" evidence="14">
    <location>
        <position position="2"/>
    </location>
</feature>
<feature type="mutagenesis site" description="In sad1; decreased germination rate, dwarf plants with round-shaped leaves and increased sensitivity to inhibition of seed germination and plant growth by exogenous ABA." evidence="2">
    <original>E</original>
    <variation>K</variation>
    <location>
        <position position="12"/>
    </location>
</feature>
<feature type="sequence conflict" description="In Ref. 6; BAF01501." evidence="10" ref="6">
    <original>D</original>
    <variation>N</variation>
    <location>
        <position position="86"/>
    </location>
</feature>
<reference key="1">
    <citation type="journal article" date="2001" name="Dev. Cell">
        <title>Modulation of abscisic acid signal transduction and biosynthesis by an Sm-like protein in Arabidopsis.</title>
        <authorList>
            <person name="Xiong L."/>
            <person name="Gong Z."/>
            <person name="Rock C.D."/>
            <person name="Subramanian S."/>
            <person name="Guo Y."/>
            <person name="Xu W."/>
            <person name="Galbraith D."/>
            <person name="Zhu J.K."/>
        </authorList>
    </citation>
    <scope>NUCLEOTIDE SEQUENCE [MRNA]</scope>
    <scope>FUNCTION</scope>
    <scope>MUTAGENESIS OF GLU-12</scope>
    <source>
        <strain>cv. Columbia</strain>
    </source>
</reference>
<reference key="2">
    <citation type="submission" date="2012-02" db="EMBL/GenBank/DDBJ databases">
        <title>Isolation and characterization of genes induced under water stress.</title>
        <authorList>
            <person name="Ali K."/>
            <person name="Tyagi A."/>
        </authorList>
    </citation>
    <scope>NUCLEOTIDE SEQUENCE [MRNA]</scope>
</reference>
<reference key="3">
    <citation type="journal article" date="1998" name="DNA Res.">
        <title>Structural analysis of Arabidopsis thaliana chromosome 5. VI. Sequence features of the regions of 1,367,185 bp covered by 19 physically assigned P1 and TAC clones.</title>
        <authorList>
            <person name="Kotani H."/>
            <person name="Nakamura Y."/>
            <person name="Sato S."/>
            <person name="Asamizu E."/>
            <person name="Kaneko T."/>
            <person name="Miyajima N."/>
            <person name="Tabata S."/>
        </authorList>
    </citation>
    <scope>NUCLEOTIDE SEQUENCE [LARGE SCALE GENOMIC DNA]</scope>
    <source>
        <strain>cv. Columbia</strain>
    </source>
</reference>
<reference key="4">
    <citation type="journal article" date="2017" name="Plant J.">
        <title>Araport11: a complete reannotation of the Arabidopsis thaliana reference genome.</title>
        <authorList>
            <person name="Cheng C.Y."/>
            <person name="Krishnakumar V."/>
            <person name="Chan A.P."/>
            <person name="Thibaud-Nissen F."/>
            <person name="Schobel S."/>
            <person name="Town C.D."/>
        </authorList>
    </citation>
    <scope>GENOME REANNOTATION</scope>
    <source>
        <strain>cv. Columbia</strain>
    </source>
</reference>
<reference key="5">
    <citation type="submission" date="2006-06" db="EMBL/GenBank/DDBJ databases">
        <title>Arabidopsis ORF clones.</title>
        <authorList>
            <person name="Quinitio C."/>
            <person name="Chen H."/>
            <person name="Kim C.J."/>
            <person name="Shinn P."/>
            <person name="Ecker J.R."/>
        </authorList>
    </citation>
    <scope>NUCLEOTIDE SEQUENCE [LARGE SCALE MRNA]</scope>
    <source>
        <strain>cv. Columbia</strain>
    </source>
</reference>
<reference key="6">
    <citation type="submission" date="2006-07" db="EMBL/GenBank/DDBJ databases">
        <title>Large-scale analysis of RIKEN Arabidopsis full-length (RAFL) cDNAs.</title>
        <authorList>
            <person name="Totoki Y."/>
            <person name="Seki M."/>
            <person name="Ishida J."/>
            <person name="Nakajima M."/>
            <person name="Enju A."/>
            <person name="Kamiya A."/>
            <person name="Narusaka M."/>
            <person name="Shin-i T."/>
            <person name="Nakagawa M."/>
            <person name="Sakamoto N."/>
            <person name="Oishi K."/>
            <person name="Kohara Y."/>
            <person name="Kobayashi M."/>
            <person name="Toyoda A."/>
            <person name="Sakaki Y."/>
            <person name="Sakurai T."/>
            <person name="Iida K."/>
            <person name="Akiyama K."/>
            <person name="Satou M."/>
            <person name="Toyoda T."/>
            <person name="Konagaya A."/>
            <person name="Carninci P."/>
            <person name="Kawai J."/>
            <person name="Hayashizaki Y."/>
            <person name="Shinozaki K."/>
        </authorList>
    </citation>
    <scope>NUCLEOTIDE SEQUENCE [LARGE SCALE MRNA]</scope>
    <source>
        <strain>cv. Columbia</strain>
    </source>
</reference>
<reference key="7">
    <citation type="journal article" date="2002" name="Plant Physiol.">
        <title>Localization, ion channel regulation, and genetic interactions during abscisic acid signaling of the nuclear mRNA cap-binding protein, ABH1.</title>
        <authorList>
            <person name="Hugouvieux V."/>
            <person name="Murata Y."/>
            <person name="Young J.J."/>
            <person name="Kwak J.M."/>
            <person name="Mackesy D.Z."/>
            <person name="Schroeder J.I."/>
        </authorList>
    </citation>
    <scope>FUNCTION</scope>
</reference>
<reference key="8">
    <citation type="journal article" date="2012" name="Mol. Cell. Proteomics">
        <title>Comparative large-scale characterisation of plant vs. mammal proteins reveals similar and idiosyncratic N-alpha acetylation features.</title>
        <authorList>
            <person name="Bienvenut W.V."/>
            <person name="Sumpton D."/>
            <person name="Martinez A."/>
            <person name="Lilla S."/>
            <person name="Espagne C."/>
            <person name="Meinnel T."/>
            <person name="Giglione C."/>
        </authorList>
    </citation>
    <scope>ACETYLATION [LARGE SCALE ANALYSIS] AT ALA-2</scope>
    <scope>CLEAVAGE OF INITIATOR METHIONINE [LARGE SCALE ANALYSIS]</scope>
    <scope>IDENTIFICATION BY MASS SPECTROMETRY [LARGE SCALE ANALYSIS]</scope>
</reference>
<reference key="9">
    <citation type="journal article" date="2012" name="Plant Cell">
        <title>LSM proteins provide accurate splicing and decay of selected transcripts to ensure normal Arabidopsis development.</title>
        <authorList>
            <person name="Perea-Resa C."/>
            <person name="Hernandez-Verdeja T."/>
            <person name="Lopez-Cobollo R."/>
            <person name="del Mar Castellano M."/>
            <person name="Salinas J."/>
        </authorList>
    </citation>
    <scope>FUNCTION</scope>
    <scope>SUBUNIT</scope>
    <scope>SUBCELLULAR LOCATION</scope>
    <scope>INTERACTION WITH LSM6A; LSM6B AND LSM7</scope>
    <scope>TISSUE SPECIFICITY</scope>
    <scope>GENE FAMILY</scope>
    <scope>DISRUPTION PHENOTYPE</scope>
</reference>
<reference key="10">
    <citation type="journal article" date="2013" name="Nucleic Acids Res.">
        <title>Arabidopsis thaliana LSM proteins function in mRNA splicing and degradation.</title>
        <authorList>
            <person name="Golisz A."/>
            <person name="Sikorski P.J."/>
            <person name="Kruszka K."/>
            <person name="Kufel J."/>
        </authorList>
    </citation>
    <scope>IDENTIFICATION BY MASS SPECTROMETRY</scope>
    <scope>FUNCTION</scope>
    <scope>SUBUNIT</scope>
    <scope>SUBCELLULAR LOCATION</scope>
    <scope>TISSUE SPECIFICITY</scope>
</reference>
<reference key="11">
    <citation type="journal article" date="2014" name="Genome Biol.">
        <title>Dynamic regulation of genome-wide pre-mRNA splicing and stress tolerance by the Sm-like protein LSm5 in Arabidopsis.</title>
        <authorList>
            <person name="Cui P."/>
            <person name="Zhang S."/>
            <person name="Ding F."/>
            <person name="Ali S."/>
            <person name="Xiong L."/>
        </authorList>
    </citation>
    <scope>FUNCTION</scope>
</reference>
<name>LSM5_ARATH</name>
<accession>Q9FKB0</accession>
<accession>Q0WMZ9</accession>
<keyword id="KW-0007">Acetylation</keyword>
<keyword id="KW-0963">Cytoplasm</keyword>
<keyword id="KW-0507">mRNA processing</keyword>
<keyword id="KW-0508">mRNA splicing</keyword>
<keyword id="KW-0539">Nucleus</keyword>
<keyword id="KW-1185">Reference proteome</keyword>
<keyword id="KW-0687">Ribonucleoprotein</keyword>
<keyword id="KW-0694">RNA-binding</keyword>
<keyword id="KW-0747">Spliceosome</keyword>
<keyword id="KW-0346">Stress response</keyword>
<evidence type="ECO:0000255" key="1">
    <source>
        <dbReference type="PROSITE-ProRule" id="PRU01346"/>
    </source>
</evidence>
<evidence type="ECO:0000269" key="2">
    <source>
    </source>
</evidence>
<evidence type="ECO:0000269" key="3">
    <source>
    </source>
</evidence>
<evidence type="ECO:0000269" key="4">
    <source>
    </source>
</evidence>
<evidence type="ECO:0000269" key="5">
    <source>
    </source>
</evidence>
<evidence type="ECO:0000269" key="6">
    <source>
    </source>
</evidence>
<evidence type="ECO:0000303" key="7">
    <source>
    </source>
</evidence>
<evidence type="ECO:0000303" key="8">
    <source>
    </source>
</evidence>
<evidence type="ECO:0000303" key="9">
    <source>
    </source>
</evidence>
<evidence type="ECO:0000305" key="10"/>
<evidence type="ECO:0000305" key="11">
    <source>
    </source>
</evidence>
<evidence type="ECO:0000312" key="12">
    <source>
        <dbReference type="Araport" id="AT5G48870"/>
    </source>
</evidence>
<evidence type="ECO:0000312" key="13">
    <source>
        <dbReference type="EMBL" id="AAK61592.1"/>
    </source>
</evidence>
<evidence type="ECO:0007744" key="14">
    <source>
    </source>
</evidence>
<dbReference type="EMBL" id="AY034896">
    <property type="protein sequence ID" value="AAK61592.1"/>
    <property type="molecule type" value="mRNA"/>
</dbReference>
<dbReference type="EMBL" id="JQ612715">
    <property type="protein sequence ID" value="AFJ05005.1"/>
    <property type="molecule type" value="Genomic_DNA"/>
</dbReference>
<dbReference type="EMBL" id="AB012242">
    <property type="protein sequence ID" value="BAB09440.1"/>
    <property type="molecule type" value="Genomic_DNA"/>
</dbReference>
<dbReference type="EMBL" id="CP002688">
    <property type="protein sequence ID" value="AED95735.1"/>
    <property type="molecule type" value="Genomic_DNA"/>
</dbReference>
<dbReference type="EMBL" id="BT025700">
    <property type="protein sequence ID" value="ABF82603.1"/>
    <property type="molecule type" value="mRNA"/>
</dbReference>
<dbReference type="EMBL" id="AK229657">
    <property type="protein sequence ID" value="BAF01501.1"/>
    <property type="molecule type" value="mRNA"/>
</dbReference>
<dbReference type="RefSeq" id="NP_199698.1">
    <property type="nucleotide sequence ID" value="NM_124264.4"/>
</dbReference>
<dbReference type="SMR" id="Q9FKB0"/>
<dbReference type="ComplexPortal" id="CPX-1308">
    <property type="entry name" value="LSM1-7-PAT1 complex, variant LSM1A-LSM3A-LSM6A-PAT1"/>
</dbReference>
<dbReference type="ComplexPortal" id="CPX-1309">
    <property type="entry name" value="LSM2-8 complex, variant LSM3A-LSM6A"/>
</dbReference>
<dbReference type="ComplexPortal" id="CPX-1345">
    <property type="entry name" value="LSM1-7-PAT1 complex, variant LSM1A-LSM3B-LSM6B-PAT1"/>
</dbReference>
<dbReference type="ComplexPortal" id="CPX-1346">
    <property type="entry name" value="LSM1-7-PAT1 complex, variant LSM1A-LSM3B-LSM6A-PAT1"/>
</dbReference>
<dbReference type="ComplexPortal" id="CPX-1347">
    <property type="entry name" value="LSM1-7-PAT1 complex, variant LSM1B-LSM3A-LSM6A-PAT1"/>
</dbReference>
<dbReference type="ComplexPortal" id="CPX-1348">
    <property type="entry name" value="LSM1-7-PAT1 complex, variant LSM1B-LSM3B-LSM6A-PAT1"/>
</dbReference>
<dbReference type="ComplexPortal" id="CPX-1349">
    <property type="entry name" value="LSM1-7-PAT1 complex, variant LSM1B-LSM3B-LSM6B-PAT1"/>
</dbReference>
<dbReference type="ComplexPortal" id="CPX-1350">
    <property type="entry name" value="LSM1-7-PAT1 complex, variant LSM1B-LSM3A-LSM6B-PAT1"/>
</dbReference>
<dbReference type="ComplexPortal" id="CPX-1351">
    <property type="entry name" value="LSM1-7-PAT1 complex, variant LSM1A-LSM3A-LSM6B-PAT1"/>
</dbReference>
<dbReference type="ComplexPortal" id="CPX-1352">
    <property type="entry name" value="LSM2-8 complex, variant LSM3A-LSM6B"/>
</dbReference>
<dbReference type="ComplexPortal" id="CPX-1353">
    <property type="entry name" value="LSM2-8 complex, variant LSM3B-LSM6A"/>
</dbReference>
<dbReference type="ComplexPortal" id="CPX-1354">
    <property type="entry name" value="LSM2-8 complex, variant LSM3B-LSM6B"/>
</dbReference>
<dbReference type="ComplexPortal" id="CPX-1391">
    <property type="entry name" value="LSM1-7-PAT1 complex, variant LSM1A-LSM3A-LSM6A-PAT1H1"/>
</dbReference>
<dbReference type="ComplexPortal" id="CPX-1392">
    <property type="entry name" value="LSM1-7-PAT1 complex, variant LSM1A-LSM3A-LSM6B-PAT1H1"/>
</dbReference>
<dbReference type="ComplexPortal" id="CPX-1393">
    <property type="entry name" value="LSM1-7-PAT1 complex, variant LSM1A-LSM3B-LSM6A-PAT1H1"/>
</dbReference>
<dbReference type="ComplexPortal" id="CPX-1394">
    <property type="entry name" value="LSM1-7-PAT1 complex, variant LSM1A-LSM3B-LSM6B-PAT1H1"/>
</dbReference>
<dbReference type="ComplexPortal" id="CPX-1395">
    <property type="entry name" value="LSM1-7-PAT1 complex, variant LSM1B-LSM3A-LSM6A-PAT1H1"/>
</dbReference>
<dbReference type="ComplexPortal" id="CPX-1396">
    <property type="entry name" value="LSM1-7-PAT1 complex, variant LSM1B-LSM3A-LSM6B-PAT1H1"/>
</dbReference>
<dbReference type="ComplexPortal" id="CPX-1397">
    <property type="entry name" value="LSM1-7-PAT1 complex, variant LSM1B-LSM3B-LSM6A-PAT1H1"/>
</dbReference>
<dbReference type="ComplexPortal" id="CPX-1398">
    <property type="entry name" value="LSM1-7-PAT1 complex, variant LSM1B-LSM3B-LSM6B-PAT1H1"/>
</dbReference>
<dbReference type="ComplexPortal" id="CPX-1399">
    <property type="entry name" value="LSM1-7-PAT1 complex, variant LSM1A-LSM3A-LSM6A-PAT1H2"/>
</dbReference>
<dbReference type="ComplexPortal" id="CPX-1400">
    <property type="entry name" value="LSM1-7-PAT1 complex, variant LSM1A-LSM3A-LSM6B-PAT1H2"/>
</dbReference>
<dbReference type="ComplexPortal" id="CPX-1401">
    <property type="entry name" value="LSM1-7-PAT1 complex, variant LSM1A-LSM3B-LSM6A-PAT1H2"/>
</dbReference>
<dbReference type="ComplexPortal" id="CPX-1402">
    <property type="entry name" value="LSM1-7-PAT1 complex, variant LSM1A-LSM3B-LSM6B-PAT1H2"/>
</dbReference>
<dbReference type="ComplexPortal" id="CPX-1403">
    <property type="entry name" value="LSM1-7-PAT1 complex, variant LSM1B-LSM3A-LSM6A-PAT1H2"/>
</dbReference>
<dbReference type="ComplexPortal" id="CPX-1404">
    <property type="entry name" value="LSM1-7-PAT1 complex, variant LSM1B-LSM3A-LSM6B-PAT1H2"/>
</dbReference>
<dbReference type="ComplexPortal" id="CPX-1405">
    <property type="entry name" value="LSM1-7-PAT1 complex, variant LSM1B-LSM3B-LSM6A-PAT1H2"/>
</dbReference>
<dbReference type="ComplexPortal" id="CPX-1406">
    <property type="entry name" value="LSM1-7-PAT1 complex, variant LSM1B-LSM3B-LSM6B-PAT1H2"/>
</dbReference>
<dbReference type="FunCoup" id="Q9FKB0">
    <property type="interactions" value="3236"/>
</dbReference>
<dbReference type="IntAct" id="Q9FKB0">
    <property type="interactions" value="3"/>
</dbReference>
<dbReference type="STRING" id="3702.Q9FKB0"/>
<dbReference type="iPTMnet" id="Q9FKB0"/>
<dbReference type="PaxDb" id="3702-AT5G48870.1"/>
<dbReference type="ProteomicsDB" id="238726"/>
<dbReference type="EnsemblPlants" id="AT5G48870.1">
    <property type="protein sequence ID" value="AT5G48870.1"/>
    <property type="gene ID" value="AT5G48870"/>
</dbReference>
<dbReference type="GeneID" id="834945"/>
<dbReference type="Gramene" id="AT5G48870.1">
    <property type="protein sequence ID" value="AT5G48870.1"/>
    <property type="gene ID" value="AT5G48870"/>
</dbReference>
<dbReference type="KEGG" id="ath:AT5G48870"/>
<dbReference type="Araport" id="AT5G48870"/>
<dbReference type="TAIR" id="AT5G48870">
    <property type="gene designation" value="SAD1"/>
</dbReference>
<dbReference type="eggNOG" id="KOG1775">
    <property type="taxonomic scope" value="Eukaryota"/>
</dbReference>
<dbReference type="HOGENOM" id="CLU_076902_6_1_1"/>
<dbReference type="InParanoid" id="Q9FKB0"/>
<dbReference type="OMA" id="YETTPQG"/>
<dbReference type="OrthoDB" id="429711at2759"/>
<dbReference type="PhylomeDB" id="Q9FKB0"/>
<dbReference type="PRO" id="PR:Q9FKB0"/>
<dbReference type="Proteomes" id="UP000006548">
    <property type="component" value="Chromosome 5"/>
</dbReference>
<dbReference type="ExpressionAtlas" id="Q9FKB0">
    <property type="expression patterns" value="baseline and differential"/>
</dbReference>
<dbReference type="GO" id="GO:1990726">
    <property type="term" value="C:Lsm1-7-Pat1 complex"/>
    <property type="evidence" value="ECO:0000303"/>
    <property type="project" value="ComplexPortal"/>
</dbReference>
<dbReference type="GO" id="GO:0120115">
    <property type="term" value="C:Lsm2-8 complex"/>
    <property type="evidence" value="ECO:0000315"/>
    <property type="project" value="ComplexPortal"/>
</dbReference>
<dbReference type="GO" id="GO:0005634">
    <property type="term" value="C:nucleus"/>
    <property type="evidence" value="ECO:0000314"/>
    <property type="project" value="ComplexPortal"/>
</dbReference>
<dbReference type="GO" id="GO:0000932">
    <property type="term" value="C:P-body"/>
    <property type="evidence" value="ECO:0000303"/>
    <property type="project" value="ComplexPortal"/>
</dbReference>
<dbReference type="GO" id="GO:0009536">
    <property type="term" value="C:plastid"/>
    <property type="evidence" value="ECO:0007005"/>
    <property type="project" value="TAIR"/>
</dbReference>
<dbReference type="GO" id="GO:0005681">
    <property type="term" value="C:spliceosomal complex"/>
    <property type="evidence" value="ECO:0007669"/>
    <property type="project" value="UniProtKB-KW"/>
</dbReference>
<dbReference type="GO" id="GO:0003723">
    <property type="term" value="F:RNA binding"/>
    <property type="evidence" value="ECO:0000250"/>
    <property type="project" value="TAIR"/>
</dbReference>
<dbReference type="GO" id="GO:0000290">
    <property type="term" value="P:deadenylation-dependent decapping of nuclear-transcribed mRNA"/>
    <property type="evidence" value="ECO:0000269"/>
    <property type="project" value="ComplexPortal"/>
</dbReference>
<dbReference type="GO" id="GO:0000398">
    <property type="term" value="P:mRNA splicing, via spliceosome"/>
    <property type="evidence" value="ECO:0000315"/>
    <property type="project" value="ComplexPortal"/>
</dbReference>
<dbReference type="GO" id="GO:0009737">
    <property type="term" value="P:response to abscisic acid"/>
    <property type="evidence" value="ECO:0000315"/>
    <property type="project" value="TAIR"/>
</dbReference>
<dbReference type="GO" id="GO:0009414">
    <property type="term" value="P:response to water deprivation"/>
    <property type="evidence" value="ECO:0000315"/>
    <property type="project" value="TAIR"/>
</dbReference>
<dbReference type="CDD" id="cd01732">
    <property type="entry name" value="LSm5"/>
    <property type="match status" value="1"/>
</dbReference>
<dbReference type="FunFam" id="2.30.30.100:FF:000003">
    <property type="entry name" value="U6 snRNA-associated Sm-like protein LSm5"/>
    <property type="match status" value="1"/>
</dbReference>
<dbReference type="Gene3D" id="2.30.30.100">
    <property type="match status" value="1"/>
</dbReference>
<dbReference type="InterPro" id="IPR033871">
    <property type="entry name" value="LSm5"/>
</dbReference>
<dbReference type="InterPro" id="IPR010920">
    <property type="entry name" value="LSM_dom_sf"/>
</dbReference>
<dbReference type="InterPro" id="IPR047575">
    <property type="entry name" value="Sm"/>
</dbReference>
<dbReference type="InterPro" id="IPR001163">
    <property type="entry name" value="Sm_dom_euk/arc"/>
</dbReference>
<dbReference type="PANTHER" id="PTHR20971">
    <property type="entry name" value="U6 SNRNA-ASSOCIATED PROTEIN"/>
    <property type="match status" value="1"/>
</dbReference>
<dbReference type="PANTHER" id="PTHR20971:SF0">
    <property type="entry name" value="U6 SNRNA-ASSOCIATED SM-LIKE PROTEIN LSM5"/>
    <property type="match status" value="1"/>
</dbReference>
<dbReference type="Pfam" id="PF01423">
    <property type="entry name" value="LSM"/>
    <property type="match status" value="1"/>
</dbReference>
<dbReference type="SMART" id="SM00651">
    <property type="entry name" value="Sm"/>
    <property type="match status" value="1"/>
</dbReference>
<dbReference type="SUPFAM" id="SSF50182">
    <property type="entry name" value="Sm-like ribonucleoproteins"/>
    <property type="match status" value="1"/>
</dbReference>
<dbReference type="PROSITE" id="PS52002">
    <property type="entry name" value="SM"/>
    <property type="match status" value="1"/>
</dbReference>
<comment type="function">
    <text evidence="2 3 4 5 6">Component of LSM protein complexes, which are involved in RNA processing. Component of the cytoplasmic LSM1-LSM7 complex which is involved in mRNA degradation by promoting decapping and leading to accurate 5'-3' mRNA decay. The cytoplasmic LSM1-LSM7 complex regulates developmental gene expression by the decapping of specific development-related transcripts. Component of the nuclear LSM2-LSM8 complex which is involved splicing nuclear mRNAs. LSM2-LSM8 binds directly to the U6 small nuclear RNAs (snRNAs) and is essential for accurate splicing of selected development-related mRNAs through the stabilization of the spliceosomal U6 snRNA. Plays a critical role in the regulation of development-related gene expression (PubMed:23221597, PubMed:23620288). Involved in the control of plant sensitivity to abscisic acid (ABA) and drought (PubMed:11740939). Functions with ABH1 as negative regulator of ABA signaling in guard cells (PubMed:12427994). Required for regulation of splicing efficiency of many stress-responsive genes under stress conditions (PubMed:24393432).</text>
</comment>
<comment type="subunit">
    <text evidence="4 5">Component of the heptameric LSM1-LSM7 complex that forms a seven-membered ring structure with a donut shape. The LSM subunits are arranged in the order LSM1, LSM2, LSM3, LSM6, LSM5, LSM7 and LSM4. Component of the heptameric LSM2-LSM8 complex that forms a seven-membered ring structure with a donut shape. The LSM subunits are arranged in the order LSM8, LSM2, LSM3, LSM6, LSM5, LSM7 and LSM4 (PubMed:23221597, PubMed:23620288). LSM2 subunit interacts only with its two neighboring subunits, LSM6A or LSM6B and LSM7 (PubMed:23221597).</text>
</comment>
<comment type="interaction">
    <interactant intactId="EBI-16419382">
        <id>Q9FKB0</id>
    </interactant>
    <interactant intactId="EBI-25520453">
        <id>A0A178WEI8</id>
        <label>AXX17_At1g48850</label>
    </interactant>
    <organismsDiffer>false</organismsDiffer>
    <experiments>3</experiments>
</comment>
<comment type="interaction">
    <interactant intactId="EBI-16419382">
        <id>Q9FKB0</id>
    </interactant>
    <interactant intactId="EBI-4431531">
        <id>Q9M1Z3</id>
        <label>LSM6A</label>
    </interactant>
    <organismsDiffer>false</organismsDiffer>
    <experiments>3</experiments>
</comment>
<comment type="interaction">
    <interactant intactId="EBI-16419382">
        <id>Q9FKB0</id>
    </interactant>
    <interactant intactId="EBI-15202260">
        <id>Q9SEZ4</id>
        <label>MYB105</label>
    </interactant>
    <organismsDiffer>false</organismsDiffer>
    <experiments>3</experiments>
</comment>
<comment type="subcellular location">
    <subcellularLocation>
        <location evidence="4 5">Cytoplasm</location>
    </subcellularLocation>
    <subcellularLocation>
        <location evidence="4 5">Nucleus</location>
    </subcellularLocation>
</comment>
<comment type="tissue specificity">
    <text evidence="4 5">Expressed in roots, leaves, stems, flowers and siliques.</text>
</comment>
<comment type="disruption phenotype">
    <text evidence="11">Embryonic lethality when homozygous.</text>
</comment>
<comment type="similarity">
    <text evidence="10">Belongs to the snRNP Sm proteins family.</text>
</comment>